<comment type="function">
    <text evidence="1">Transfers a GMP moiety from GTP to Mo-molybdopterin (Mo-MPT) cofactor (Moco or molybdenum cofactor) to form Mo-molybdopterin guanine dinucleotide (Mo-MGD) cofactor.</text>
</comment>
<comment type="catalytic activity">
    <reaction evidence="1">
        <text>Mo-molybdopterin + GTP + H(+) = Mo-molybdopterin guanine dinucleotide + diphosphate</text>
        <dbReference type="Rhea" id="RHEA:34243"/>
        <dbReference type="ChEBI" id="CHEBI:15378"/>
        <dbReference type="ChEBI" id="CHEBI:33019"/>
        <dbReference type="ChEBI" id="CHEBI:37565"/>
        <dbReference type="ChEBI" id="CHEBI:71302"/>
        <dbReference type="ChEBI" id="CHEBI:71310"/>
        <dbReference type="EC" id="2.7.7.77"/>
    </reaction>
</comment>
<comment type="cofactor">
    <cofactor evidence="1">
        <name>Mg(2+)</name>
        <dbReference type="ChEBI" id="CHEBI:18420"/>
    </cofactor>
</comment>
<comment type="subunit">
    <text evidence="1">Monomer.</text>
</comment>
<comment type="subcellular location">
    <subcellularLocation>
        <location evidence="1">Cytoplasm</location>
    </subcellularLocation>
</comment>
<comment type="domain">
    <text evidence="1">The N-terminal domain determines nucleotide recognition and specific binding, while the C-terminal domain determines the specific binding to the target protein.</text>
</comment>
<comment type="similarity">
    <text evidence="1">Belongs to the MobA family.</text>
</comment>
<evidence type="ECO:0000255" key="1">
    <source>
        <dbReference type="HAMAP-Rule" id="MF_00316"/>
    </source>
</evidence>
<sequence>MRRDIAGIVLAGGQSRRMGGGDKSLLPLGSGSVLDQILSRFGPQIEILALSANGDPERFSRFGLPVLADTVEGFAGPLAGILTGLEWAIAGTPCKAVVTAAGDTPFLPLDLVDRLAAAARDHPGSIAVASSAGRRHPTFALWPTECRDALRHFLVDEDNRRVSDFIERHGHVEVEFRFVQSAGLDPFFNINVPDDLAQAARLLQSMTS</sequence>
<reference key="1">
    <citation type="journal article" date="2000" name="DNA Res.">
        <title>Complete genome structure of the nitrogen-fixing symbiotic bacterium Mesorhizobium loti.</title>
        <authorList>
            <person name="Kaneko T."/>
            <person name="Nakamura Y."/>
            <person name="Sato S."/>
            <person name="Asamizu E."/>
            <person name="Kato T."/>
            <person name="Sasamoto S."/>
            <person name="Watanabe A."/>
            <person name="Idesawa K."/>
            <person name="Ishikawa A."/>
            <person name="Kawashima K."/>
            <person name="Kimura T."/>
            <person name="Kishida Y."/>
            <person name="Kiyokawa C."/>
            <person name="Kohara M."/>
            <person name="Matsumoto M."/>
            <person name="Matsuno A."/>
            <person name="Mochizuki Y."/>
            <person name="Nakayama S."/>
            <person name="Nakazaki N."/>
            <person name="Shimpo S."/>
            <person name="Sugimoto M."/>
            <person name="Takeuchi C."/>
            <person name="Yamada M."/>
            <person name="Tabata S."/>
        </authorList>
    </citation>
    <scope>NUCLEOTIDE SEQUENCE [LARGE SCALE GENOMIC DNA]</scope>
    <source>
        <strain>LMG 29417 / CECT 9101 / MAFF 303099</strain>
    </source>
</reference>
<keyword id="KW-0963">Cytoplasm</keyword>
<keyword id="KW-0342">GTP-binding</keyword>
<keyword id="KW-0460">Magnesium</keyword>
<keyword id="KW-0479">Metal-binding</keyword>
<keyword id="KW-0501">Molybdenum cofactor biosynthesis</keyword>
<keyword id="KW-0547">Nucleotide-binding</keyword>
<keyword id="KW-0808">Transferase</keyword>
<organism>
    <name type="scientific">Mesorhizobium japonicum (strain LMG 29417 / CECT 9101 / MAFF 303099)</name>
    <name type="common">Mesorhizobium loti (strain MAFF 303099)</name>
    <dbReference type="NCBI Taxonomy" id="266835"/>
    <lineage>
        <taxon>Bacteria</taxon>
        <taxon>Pseudomonadati</taxon>
        <taxon>Pseudomonadota</taxon>
        <taxon>Alphaproteobacteria</taxon>
        <taxon>Hyphomicrobiales</taxon>
        <taxon>Phyllobacteriaceae</taxon>
        <taxon>Mesorhizobium</taxon>
    </lineage>
</organism>
<protein>
    <recommendedName>
        <fullName evidence="1">Molybdenum cofactor guanylyltransferase</fullName>
        <shortName evidence="1">MoCo guanylyltransferase</shortName>
        <ecNumber evidence="1">2.7.7.77</ecNumber>
    </recommendedName>
    <alternativeName>
        <fullName evidence="1">GTP:molybdopterin guanylyltransferase</fullName>
    </alternativeName>
    <alternativeName>
        <fullName evidence="1">Mo-MPT guanylyltransferase</fullName>
    </alternativeName>
    <alternativeName>
        <fullName evidence="1">Molybdopterin guanylyltransferase</fullName>
    </alternativeName>
    <alternativeName>
        <fullName evidence="1">Molybdopterin-guanine dinucleotide synthase</fullName>
        <shortName evidence="1">MGD synthase</shortName>
    </alternativeName>
</protein>
<proteinExistence type="inferred from homology"/>
<accession>Q98MK2</accession>
<dbReference type="EC" id="2.7.7.77" evidence="1"/>
<dbReference type="EMBL" id="BA000012">
    <property type="protein sequence ID" value="BAB48111.1"/>
    <property type="molecule type" value="Genomic_DNA"/>
</dbReference>
<dbReference type="RefSeq" id="WP_010909467.1">
    <property type="nucleotide sequence ID" value="NC_002678.2"/>
</dbReference>
<dbReference type="SMR" id="Q98MK2"/>
<dbReference type="KEGG" id="mlo:mlr0547"/>
<dbReference type="PATRIC" id="fig|266835.9.peg.439"/>
<dbReference type="eggNOG" id="COG0746">
    <property type="taxonomic scope" value="Bacteria"/>
</dbReference>
<dbReference type="HOGENOM" id="CLU_055597_5_0_5"/>
<dbReference type="Proteomes" id="UP000000552">
    <property type="component" value="Chromosome"/>
</dbReference>
<dbReference type="GO" id="GO:0005737">
    <property type="term" value="C:cytoplasm"/>
    <property type="evidence" value="ECO:0007669"/>
    <property type="project" value="UniProtKB-SubCell"/>
</dbReference>
<dbReference type="GO" id="GO:0005525">
    <property type="term" value="F:GTP binding"/>
    <property type="evidence" value="ECO:0007669"/>
    <property type="project" value="UniProtKB-UniRule"/>
</dbReference>
<dbReference type="GO" id="GO:0046872">
    <property type="term" value="F:metal ion binding"/>
    <property type="evidence" value="ECO:0007669"/>
    <property type="project" value="UniProtKB-KW"/>
</dbReference>
<dbReference type="GO" id="GO:0061603">
    <property type="term" value="F:molybdenum cofactor guanylyltransferase activity"/>
    <property type="evidence" value="ECO:0007669"/>
    <property type="project" value="UniProtKB-EC"/>
</dbReference>
<dbReference type="GO" id="GO:1902758">
    <property type="term" value="P:bis(molybdopterin guanine dinucleotide)molybdenum biosynthetic process"/>
    <property type="evidence" value="ECO:0007669"/>
    <property type="project" value="TreeGrafter"/>
</dbReference>
<dbReference type="CDD" id="cd02503">
    <property type="entry name" value="MobA"/>
    <property type="match status" value="1"/>
</dbReference>
<dbReference type="Gene3D" id="3.90.550.10">
    <property type="entry name" value="Spore Coat Polysaccharide Biosynthesis Protein SpsA, Chain A"/>
    <property type="match status" value="1"/>
</dbReference>
<dbReference type="HAMAP" id="MF_00316">
    <property type="entry name" value="MobA"/>
    <property type="match status" value="1"/>
</dbReference>
<dbReference type="InterPro" id="IPR025877">
    <property type="entry name" value="MobA-like_NTP_Trfase"/>
</dbReference>
<dbReference type="InterPro" id="IPR013482">
    <property type="entry name" value="Molybde_CF_guanTrfase"/>
</dbReference>
<dbReference type="InterPro" id="IPR029044">
    <property type="entry name" value="Nucleotide-diphossugar_trans"/>
</dbReference>
<dbReference type="NCBIfam" id="TIGR02665">
    <property type="entry name" value="molyb_mobA"/>
    <property type="match status" value="1"/>
</dbReference>
<dbReference type="PANTHER" id="PTHR19136">
    <property type="entry name" value="MOLYBDENUM COFACTOR GUANYLYLTRANSFERASE"/>
    <property type="match status" value="1"/>
</dbReference>
<dbReference type="PANTHER" id="PTHR19136:SF81">
    <property type="entry name" value="MOLYBDENUM COFACTOR GUANYLYLTRANSFERASE"/>
    <property type="match status" value="1"/>
</dbReference>
<dbReference type="Pfam" id="PF12804">
    <property type="entry name" value="NTP_transf_3"/>
    <property type="match status" value="1"/>
</dbReference>
<dbReference type="SUPFAM" id="SSF53448">
    <property type="entry name" value="Nucleotide-diphospho-sugar transferases"/>
    <property type="match status" value="1"/>
</dbReference>
<feature type="chain" id="PRO_0000134904" description="Molybdenum cofactor guanylyltransferase">
    <location>
        <begin position="1"/>
        <end position="208"/>
    </location>
</feature>
<feature type="binding site" evidence="1">
    <location>
        <begin position="10"/>
        <end position="12"/>
    </location>
    <ligand>
        <name>GTP</name>
        <dbReference type="ChEBI" id="CHEBI:37565"/>
    </ligand>
</feature>
<feature type="binding site" evidence="1">
    <location>
        <position position="23"/>
    </location>
    <ligand>
        <name>GTP</name>
        <dbReference type="ChEBI" id="CHEBI:37565"/>
    </ligand>
</feature>
<feature type="binding site" evidence="1">
    <location>
        <position position="69"/>
    </location>
    <ligand>
        <name>GTP</name>
        <dbReference type="ChEBI" id="CHEBI:37565"/>
    </ligand>
</feature>
<feature type="binding site" evidence="1">
    <location>
        <position position="103"/>
    </location>
    <ligand>
        <name>GTP</name>
        <dbReference type="ChEBI" id="CHEBI:37565"/>
    </ligand>
</feature>
<feature type="binding site" evidence="1">
    <location>
        <position position="103"/>
    </location>
    <ligand>
        <name>Mg(2+)</name>
        <dbReference type="ChEBI" id="CHEBI:18420"/>
    </ligand>
</feature>
<name>MOBA_RHILO</name>
<gene>
    <name evidence="1" type="primary">mobA</name>
    <name type="ordered locus">mlr0547</name>
</gene>